<feature type="chain" id="PRO_1000196357" description="Small ribosomal subunit protein bS16">
    <location>
        <begin position="1"/>
        <end position="84"/>
    </location>
</feature>
<keyword id="KW-0687">Ribonucleoprotein</keyword>
<keyword id="KW-0689">Ribosomal protein</keyword>
<dbReference type="EMBL" id="CP001052">
    <property type="protein sequence ID" value="ACD17371.1"/>
    <property type="molecule type" value="Genomic_DNA"/>
</dbReference>
<dbReference type="RefSeq" id="WP_007180912.1">
    <property type="nucleotide sequence ID" value="NC_010681.1"/>
</dbReference>
<dbReference type="SMR" id="B2T607"/>
<dbReference type="STRING" id="398527.Bphyt_2977"/>
<dbReference type="GeneID" id="97307996"/>
<dbReference type="KEGG" id="bpy:Bphyt_2977"/>
<dbReference type="eggNOG" id="COG0228">
    <property type="taxonomic scope" value="Bacteria"/>
</dbReference>
<dbReference type="HOGENOM" id="CLU_100590_5_1_4"/>
<dbReference type="OrthoDB" id="9807878at2"/>
<dbReference type="Proteomes" id="UP000001739">
    <property type="component" value="Chromosome 1"/>
</dbReference>
<dbReference type="GO" id="GO:0005737">
    <property type="term" value="C:cytoplasm"/>
    <property type="evidence" value="ECO:0007669"/>
    <property type="project" value="UniProtKB-ARBA"/>
</dbReference>
<dbReference type="GO" id="GO:0015935">
    <property type="term" value="C:small ribosomal subunit"/>
    <property type="evidence" value="ECO:0007669"/>
    <property type="project" value="TreeGrafter"/>
</dbReference>
<dbReference type="GO" id="GO:0003735">
    <property type="term" value="F:structural constituent of ribosome"/>
    <property type="evidence" value="ECO:0007669"/>
    <property type="project" value="InterPro"/>
</dbReference>
<dbReference type="GO" id="GO:0006412">
    <property type="term" value="P:translation"/>
    <property type="evidence" value="ECO:0007669"/>
    <property type="project" value="UniProtKB-UniRule"/>
</dbReference>
<dbReference type="Gene3D" id="3.30.1320.10">
    <property type="match status" value="1"/>
</dbReference>
<dbReference type="HAMAP" id="MF_00385">
    <property type="entry name" value="Ribosomal_bS16"/>
    <property type="match status" value="1"/>
</dbReference>
<dbReference type="InterPro" id="IPR000307">
    <property type="entry name" value="Ribosomal_bS16"/>
</dbReference>
<dbReference type="InterPro" id="IPR023803">
    <property type="entry name" value="Ribosomal_bS16_dom_sf"/>
</dbReference>
<dbReference type="NCBIfam" id="TIGR00002">
    <property type="entry name" value="S16"/>
    <property type="match status" value="1"/>
</dbReference>
<dbReference type="PANTHER" id="PTHR12919">
    <property type="entry name" value="30S RIBOSOMAL PROTEIN S16"/>
    <property type="match status" value="1"/>
</dbReference>
<dbReference type="PANTHER" id="PTHR12919:SF20">
    <property type="entry name" value="SMALL RIBOSOMAL SUBUNIT PROTEIN BS16M"/>
    <property type="match status" value="1"/>
</dbReference>
<dbReference type="Pfam" id="PF00886">
    <property type="entry name" value="Ribosomal_S16"/>
    <property type="match status" value="1"/>
</dbReference>
<dbReference type="SUPFAM" id="SSF54565">
    <property type="entry name" value="Ribosomal protein S16"/>
    <property type="match status" value="1"/>
</dbReference>
<gene>
    <name evidence="1" type="primary">rpsP</name>
    <name type="ordered locus">Bphyt_2977</name>
</gene>
<reference key="1">
    <citation type="journal article" date="2011" name="J. Bacteriol.">
        <title>Complete genome sequence of the plant growth-promoting endophyte Burkholderia phytofirmans strain PsJN.</title>
        <authorList>
            <person name="Weilharter A."/>
            <person name="Mitter B."/>
            <person name="Shin M.V."/>
            <person name="Chain P.S."/>
            <person name="Nowak J."/>
            <person name="Sessitsch A."/>
        </authorList>
    </citation>
    <scope>NUCLEOTIDE SEQUENCE [LARGE SCALE GENOMIC DNA]</scope>
    <source>
        <strain>DSM 17436 / LMG 22146 / PsJN</strain>
    </source>
</reference>
<organism>
    <name type="scientific">Paraburkholderia phytofirmans (strain DSM 17436 / LMG 22146 / PsJN)</name>
    <name type="common">Burkholderia phytofirmans</name>
    <dbReference type="NCBI Taxonomy" id="398527"/>
    <lineage>
        <taxon>Bacteria</taxon>
        <taxon>Pseudomonadati</taxon>
        <taxon>Pseudomonadota</taxon>
        <taxon>Betaproteobacteria</taxon>
        <taxon>Burkholderiales</taxon>
        <taxon>Burkholderiaceae</taxon>
        <taxon>Paraburkholderia</taxon>
    </lineage>
</organism>
<name>RS16_PARPJ</name>
<comment type="similarity">
    <text evidence="1">Belongs to the bacterial ribosomal protein bS16 family.</text>
</comment>
<sequence length="84" mass="9419">MVIIRLARGGSKKRPFYNIVATDSRNRRDGRFIERVGFYNPVATKGESLRIAQDRLTYWQGVGAQLSPTVERLVKEAAKAQPAA</sequence>
<proteinExistence type="inferred from homology"/>
<protein>
    <recommendedName>
        <fullName evidence="1">Small ribosomal subunit protein bS16</fullName>
    </recommendedName>
    <alternativeName>
        <fullName evidence="2">30S ribosomal protein S16</fullName>
    </alternativeName>
</protein>
<accession>B2T607</accession>
<evidence type="ECO:0000255" key="1">
    <source>
        <dbReference type="HAMAP-Rule" id="MF_00385"/>
    </source>
</evidence>
<evidence type="ECO:0000305" key="2"/>